<proteinExistence type="inferred from homology"/>
<organism>
    <name type="scientific">Rhodopseudomonas palustris (strain TIE-1)</name>
    <dbReference type="NCBI Taxonomy" id="395960"/>
    <lineage>
        <taxon>Bacteria</taxon>
        <taxon>Pseudomonadati</taxon>
        <taxon>Pseudomonadota</taxon>
        <taxon>Alphaproteobacteria</taxon>
        <taxon>Hyphomicrobiales</taxon>
        <taxon>Nitrobacteraceae</taxon>
        <taxon>Rhodopseudomonas</taxon>
    </lineage>
</organism>
<gene>
    <name evidence="1" type="primary">trpC</name>
    <name type="ordered locus">Rpal_3236</name>
</gene>
<protein>
    <recommendedName>
        <fullName evidence="1">Indole-3-glycerol phosphate synthase</fullName>
        <shortName evidence="1">IGPS</shortName>
        <ecNumber evidence="1">4.1.1.48</ecNumber>
    </recommendedName>
</protein>
<evidence type="ECO:0000255" key="1">
    <source>
        <dbReference type="HAMAP-Rule" id="MF_00134"/>
    </source>
</evidence>
<comment type="catalytic activity">
    <reaction evidence="1">
        <text>1-(2-carboxyphenylamino)-1-deoxy-D-ribulose 5-phosphate + H(+) = (1S,2R)-1-C-(indol-3-yl)glycerol 3-phosphate + CO2 + H2O</text>
        <dbReference type="Rhea" id="RHEA:23476"/>
        <dbReference type="ChEBI" id="CHEBI:15377"/>
        <dbReference type="ChEBI" id="CHEBI:15378"/>
        <dbReference type="ChEBI" id="CHEBI:16526"/>
        <dbReference type="ChEBI" id="CHEBI:58613"/>
        <dbReference type="ChEBI" id="CHEBI:58866"/>
        <dbReference type="EC" id="4.1.1.48"/>
    </reaction>
</comment>
<comment type="pathway">
    <text evidence="1">Amino-acid biosynthesis; L-tryptophan biosynthesis; L-tryptophan from chorismate: step 4/5.</text>
</comment>
<comment type="similarity">
    <text evidence="1">Belongs to the TrpC family.</text>
</comment>
<accession>B3Q6M9</accession>
<keyword id="KW-0028">Amino-acid biosynthesis</keyword>
<keyword id="KW-0057">Aromatic amino acid biosynthesis</keyword>
<keyword id="KW-0210">Decarboxylase</keyword>
<keyword id="KW-0456">Lyase</keyword>
<keyword id="KW-0822">Tryptophan biosynthesis</keyword>
<reference key="1">
    <citation type="submission" date="2008-05" db="EMBL/GenBank/DDBJ databases">
        <title>Complete sequence of Rhodopseudomonas palustris TIE-1.</title>
        <authorList>
            <consortium name="US DOE Joint Genome Institute"/>
            <person name="Lucas S."/>
            <person name="Copeland A."/>
            <person name="Lapidus A."/>
            <person name="Glavina del Rio T."/>
            <person name="Dalin E."/>
            <person name="Tice H."/>
            <person name="Pitluck S."/>
            <person name="Chain P."/>
            <person name="Malfatti S."/>
            <person name="Shin M."/>
            <person name="Vergez L."/>
            <person name="Lang D."/>
            <person name="Schmutz J."/>
            <person name="Larimer F."/>
            <person name="Land M."/>
            <person name="Hauser L."/>
            <person name="Kyrpides N."/>
            <person name="Mikhailova N."/>
            <person name="Emerson D."/>
            <person name="Newman D.K."/>
            <person name="Roden E."/>
            <person name="Richardson P."/>
        </authorList>
    </citation>
    <scope>NUCLEOTIDE SEQUENCE [LARGE SCALE GENOMIC DNA]</scope>
    <source>
        <strain>TIE-1</strain>
    </source>
</reference>
<name>TRPC_RHOPT</name>
<sequence>MSDILTKIEAYKREEIAAAKRERPLAAIEAIAREASPPRGFVKALRAKHAAGDYGLIAEIKKASPSKGLIRADFDPSALARAYEAGGAACLSVLTDTPSFQGSLDYLVAARAAVSLPALRKDFMYDTYQVVEARAHGADCILIIMAALDDAEAKDIEDAAFDLGMDVLLEVHDAPELERALKLRSPMVGVNNRNLRTFEVTLATSEALAPLIPKDRLMVGESGIFTPADLARLARVGMSTFLVGESLMRQQDVAAATRALLARAA</sequence>
<feature type="chain" id="PRO_1000095885" description="Indole-3-glycerol phosphate synthase">
    <location>
        <begin position="1"/>
        <end position="265"/>
    </location>
</feature>
<dbReference type="EC" id="4.1.1.48" evidence="1"/>
<dbReference type="EMBL" id="CP001096">
    <property type="protein sequence ID" value="ACF01738.1"/>
    <property type="molecule type" value="Genomic_DNA"/>
</dbReference>
<dbReference type="RefSeq" id="WP_012496336.1">
    <property type="nucleotide sequence ID" value="NC_011004.1"/>
</dbReference>
<dbReference type="SMR" id="B3Q6M9"/>
<dbReference type="KEGG" id="rpt:Rpal_3236"/>
<dbReference type="HOGENOM" id="CLU_034247_2_0_5"/>
<dbReference type="OrthoDB" id="9804217at2"/>
<dbReference type="UniPathway" id="UPA00035">
    <property type="reaction ID" value="UER00043"/>
</dbReference>
<dbReference type="Proteomes" id="UP000001725">
    <property type="component" value="Chromosome"/>
</dbReference>
<dbReference type="GO" id="GO:0004425">
    <property type="term" value="F:indole-3-glycerol-phosphate synthase activity"/>
    <property type="evidence" value="ECO:0007669"/>
    <property type="project" value="UniProtKB-UniRule"/>
</dbReference>
<dbReference type="GO" id="GO:0004640">
    <property type="term" value="F:phosphoribosylanthranilate isomerase activity"/>
    <property type="evidence" value="ECO:0007669"/>
    <property type="project" value="TreeGrafter"/>
</dbReference>
<dbReference type="GO" id="GO:0000162">
    <property type="term" value="P:L-tryptophan biosynthetic process"/>
    <property type="evidence" value="ECO:0007669"/>
    <property type="project" value="UniProtKB-UniRule"/>
</dbReference>
<dbReference type="CDD" id="cd00331">
    <property type="entry name" value="IGPS"/>
    <property type="match status" value="1"/>
</dbReference>
<dbReference type="FunFam" id="3.20.20.70:FF:000024">
    <property type="entry name" value="Indole-3-glycerol phosphate synthase"/>
    <property type="match status" value="1"/>
</dbReference>
<dbReference type="Gene3D" id="3.20.20.70">
    <property type="entry name" value="Aldolase class I"/>
    <property type="match status" value="1"/>
</dbReference>
<dbReference type="HAMAP" id="MF_00134_B">
    <property type="entry name" value="IGPS_B"/>
    <property type="match status" value="1"/>
</dbReference>
<dbReference type="InterPro" id="IPR013785">
    <property type="entry name" value="Aldolase_TIM"/>
</dbReference>
<dbReference type="InterPro" id="IPR045186">
    <property type="entry name" value="Indole-3-glycerol_P_synth"/>
</dbReference>
<dbReference type="InterPro" id="IPR013798">
    <property type="entry name" value="Indole-3-glycerol_P_synth_dom"/>
</dbReference>
<dbReference type="InterPro" id="IPR001468">
    <property type="entry name" value="Indole-3-GlycerolPSynthase_CS"/>
</dbReference>
<dbReference type="InterPro" id="IPR011060">
    <property type="entry name" value="RibuloseP-bd_barrel"/>
</dbReference>
<dbReference type="NCBIfam" id="NF001370">
    <property type="entry name" value="PRK00278.1-2"/>
    <property type="match status" value="1"/>
</dbReference>
<dbReference type="NCBIfam" id="NF001373">
    <property type="entry name" value="PRK00278.1-6"/>
    <property type="match status" value="1"/>
</dbReference>
<dbReference type="NCBIfam" id="NF001377">
    <property type="entry name" value="PRK00278.2-4"/>
    <property type="match status" value="1"/>
</dbReference>
<dbReference type="PANTHER" id="PTHR22854:SF2">
    <property type="entry name" value="INDOLE-3-GLYCEROL-PHOSPHATE SYNTHASE"/>
    <property type="match status" value="1"/>
</dbReference>
<dbReference type="PANTHER" id="PTHR22854">
    <property type="entry name" value="TRYPTOPHAN BIOSYNTHESIS PROTEIN"/>
    <property type="match status" value="1"/>
</dbReference>
<dbReference type="Pfam" id="PF00218">
    <property type="entry name" value="IGPS"/>
    <property type="match status" value="1"/>
</dbReference>
<dbReference type="SUPFAM" id="SSF51366">
    <property type="entry name" value="Ribulose-phoshate binding barrel"/>
    <property type="match status" value="1"/>
</dbReference>
<dbReference type="PROSITE" id="PS00614">
    <property type="entry name" value="IGPS"/>
    <property type="match status" value="1"/>
</dbReference>